<evidence type="ECO:0000255" key="1">
    <source>
        <dbReference type="PROSITE-ProRule" id="PRU00227"/>
    </source>
</evidence>
<evidence type="ECO:0000256" key="2">
    <source>
        <dbReference type="SAM" id="MobiDB-lite"/>
    </source>
</evidence>
<evidence type="ECO:0000269" key="3">
    <source>
    </source>
</evidence>
<evidence type="ECO:0000303" key="4">
    <source>
    </source>
</evidence>
<comment type="function">
    <text evidence="3">Transcription factor that specifically regulates the thioclapurine biosynthesis gene cluster (PubMed:27390873).</text>
</comment>
<comment type="subcellular location">
    <subcellularLocation>
        <location evidence="1">Nucleus</location>
    </subcellularLocation>
</comment>
<sequence length="368" mass="40091">MNPMLTNNSQPSNYTAGNAKGKIKKLRSACDACHASKVRCSGEPICARCQRDNVACHYSYRAHQGKPKGSLNRKTIERMKAAGFIEQRQRPAASQPPGHGTSRDSSVCASGTTTDNLLNFIEIQPPGESNESPVAIHATPSPCFAMTGGLLPDFDAANLDAFLEAYQTPEDSCLRAVEEFPGASPADMDCIFIGTPSSMSRDYTEVATCRCVREITQQINNVHAASADRSTTGLDDVLHYTREISACISGLLQCYSCGGQVQVFVLASVVLSLLMELMHPLLDSSTDTSRPRAQIRVGNYDMSGQLGDVLEKVIVRSIITKLRQVVDKFEMKADFLRSETAQAEFLKSEARRLKRGFGRIEEGTATLP</sequence>
<gene>
    <name evidence="4" type="primary">tcpZ</name>
    <name type="ORF">CPUR_02671</name>
</gene>
<reference key="1">
    <citation type="journal article" date="2013" name="PLoS Genet.">
        <title>Plant-symbiotic fungi as chemical engineers: Multi-genome analysis of the Clavicipitaceae reveals dynamics of alkaloid loci.</title>
        <authorList>
            <person name="Schardl C.L."/>
            <person name="Young C.A."/>
            <person name="Hesse U."/>
            <person name="Amyotte S.G."/>
            <person name="Andreeva K."/>
            <person name="Calie P.J."/>
            <person name="Fleetwood D.J."/>
            <person name="Haws D.C."/>
            <person name="Moore N."/>
            <person name="Oeser B."/>
            <person name="Panaccione D.G."/>
            <person name="Schweri K.K."/>
            <person name="Voisey C.R."/>
            <person name="Farman M.L."/>
            <person name="Jaromczyk J.W."/>
            <person name="Roe B.A."/>
            <person name="O'Sullivan D.M."/>
            <person name="Scott B."/>
            <person name="Tudzynski P."/>
            <person name="An Z."/>
            <person name="Arnaoudova E.G."/>
            <person name="Bullock C.T."/>
            <person name="Charlton N.D."/>
            <person name="Chen L."/>
            <person name="Cox M."/>
            <person name="Dinkins R.D."/>
            <person name="Florea S."/>
            <person name="Glenn A.E."/>
            <person name="Gordon A."/>
            <person name="Gueldener U."/>
            <person name="Harris D.R."/>
            <person name="Hollin W."/>
            <person name="Jaromczyk J."/>
            <person name="Johnson R.D."/>
            <person name="Khan A.K."/>
            <person name="Leistner E."/>
            <person name="Leuchtmann A."/>
            <person name="Li C."/>
            <person name="Liu J."/>
            <person name="Liu J."/>
            <person name="Liu M."/>
            <person name="Mace W."/>
            <person name="Machado C."/>
            <person name="Nagabhyru P."/>
            <person name="Pan J."/>
            <person name="Schmid J."/>
            <person name="Sugawara K."/>
            <person name="Steiner U."/>
            <person name="Takach J.E."/>
            <person name="Tanaka E."/>
            <person name="Webb J.S."/>
            <person name="Wilson E.V."/>
            <person name="Wiseman J.L."/>
            <person name="Yoshida R."/>
            <person name="Zeng Z."/>
        </authorList>
    </citation>
    <scope>NUCLEOTIDE SEQUENCE [LARGE SCALE GENOMIC DNA]</scope>
    <source>
        <strain>20.1</strain>
    </source>
</reference>
<reference key="2">
    <citation type="journal article" date="2016" name="PLoS ONE">
        <title>The epipolythiodiketopiperazine gene cluster in Claviceps purpurea: dysfunctional cytochrome P450 enzyme prevents formation of the previously unknown clapurines.</title>
        <authorList>
            <person name="Dopstadt J."/>
            <person name="Neubauer L."/>
            <person name="Tudzynski P."/>
            <person name="Humpf H.U."/>
        </authorList>
    </citation>
    <scope>FUNCTION</scope>
</reference>
<feature type="chain" id="PRO_0000437714" description="C6 finger domain transcription factor tcpZ">
    <location>
        <begin position="1"/>
        <end position="368"/>
    </location>
</feature>
<feature type="DNA-binding region" description="Zn(2)-C6 fungal-type" evidence="1">
    <location>
        <begin position="30"/>
        <end position="56"/>
    </location>
</feature>
<feature type="region of interest" description="Disordered" evidence="2">
    <location>
        <begin position="84"/>
        <end position="109"/>
    </location>
</feature>
<dbReference type="EMBL" id="CAGA01000011">
    <property type="protein sequence ID" value="CCE28980.1"/>
    <property type="molecule type" value="Genomic_DNA"/>
</dbReference>
<dbReference type="SMR" id="M1W424"/>
<dbReference type="VEuPathDB" id="FungiDB:CPUR_02671"/>
<dbReference type="eggNOG" id="ENOG502SSPP">
    <property type="taxonomic scope" value="Eukaryota"/>
</dbReference>
<dbReference type="HOGENOM" id="CLU_052542_1_0_1"/>
<dbReference type="OrthoDB" id="2328572at2759"/>
<dbReference type="Proteomes" id="UP000016801">
    <property type="component" value="Unassembled WGS sequence"/>
</dbReference>
<dbReference type="GO" id="GO:0005634">
    <property type="term" value="C:nucleus"/>
    <property type="evidence" value="ECO:0007669"/>
    <property type="project" value="UniProtKB-SubCell"/>
</dbReference>
<dbReference type="GO" id="GO:0000981">
    <property type="term" value="F:DNA-binding transcription factor activity, RNA polymerase II-specific"/>
    <property type="evidence" value="ECO:0007669"/>
    <property type="project" value="InterPro"/>
</dbReference>
<dbReference type="GO" id="GO:0043565">
    <property type="term" value="F:sequence-specific DNA binding"/>
    <property type="evidence" value="ECO:0007669"/>
    <property type="project" value="TreeGrafter"/>
</dbReference>
<dbReference type="GO" id="GO:0008270">
    <property type="term" value="F:zinc ion binding"/>
    <property type="evidence" value="ECO:0007669"/>
    <property type="project" value="InterPro"/>
</dbReference>
<dbReference type="GO" id="GO:0045944">
    <property type="term" value="P:positive regulation of transcription by RNA polymerase II"/>
    <property type="evidence" value="ECO:0007669"/>
    <property type="project" value="TreeGrafter"/>
</dbReference>
<dbReference type="CDD" id="cd00067">
    <property type="entry name" value="GAL4"/>
    <property type="match status" value="1"/>
</dbReference>
<dbReference type="Gene3D" id="4.10.240.10">
    <property type="entry name" value="Zn(2)-C6 fungal-type DNA-binding domain"/>
    <property type="match status" value="1"/>
</dbReference>
<dbReference type="InterPro" id="IPR051711">
    <property type="entry name" value="Stress_Response_Reg"/>
</dbReference>
<dbReference type="InterPro" id="IPR036864">
    <property type="entry name" value="Zn2-C6_fun-type_DNA-bd_sf"/>
</dbReference>
<dbReference type="InterPro" id="IPR001138">
    <property type="entry name" value="Zn2Cys6_DnaBD"/>
</dbReference>
<dbReference type="PANTHER" id="PTHR47540">
    <property type="entry name" value="THIAMINE REPRESSIBLE GENES REGULATORY PROTEIN THI5"/>
    <property type="match status" value="1"/>
</dbReference>
<dbReference type="PANTHER" id="PTHR47540:SF2">
    <property type="entry name" value="ZN(II)2CYS6 TRANSCRIPTION FACTOR (EUROFUNG)"/>
    <property type="match status" value="1"/>
</dbReference>
<dbReference type="Pfam" id="PF00172">
    <property type="entry name" value="Zn_clus"/>
    <property type="match status" value="1"/>
</dbReference>
<dbReference type="SMART" id="SM00066">
    <property type="entry name" value="GAL4"/>
    <property type="match status" value="1"/>
</dbReference>
<dbReference type="SUPFAM" id="SSF57701">
    <property type="entry name" value="Zn2/Cys6 DNA-binding domain"/>
    <property type="match status" value="1"/>
</dbReference>
<dbReference type="PROSITE" id="PS00463">
    <property type="entry name" value="ZN2_CY6_FUNGAL_1"/>
    <property type="match status" value="1"/>
</dbReference>
<dbReference type="PROSITE" id="PS50048">
    <property type="entry name" value="ZN2_CY6_FUNGAL_2"/>
    <property type="match status" value="1"/>
</dbReference>
<name>TCPZ_CLAP2</name>
<organism>
    <name type="scientific">Claviceps purpurea (strain 20.1)</name>
    <name type="common">Ergot fungus</name>
    <name type="synonym">Sphacelia segetum</name>
    <dbReference type="NCBI Taxonomy" id="1111077"/>
    <lineage>
        <taxon>Eukaryota</taxon>
        <taxon>Fungi</taxon>
        <taxon>Dikarya</taxon>
        <taxon>Ascomycota</taxon>
        <taxon>Pezizomycotina</taxon>
        <taxon>Sordariomycetes</taxon>
        <taxon>Hypocreomycetidae</taxon>
        <taxon>Hypocreales</taxon>
        <taxon>Clavicipitaceae</taxon>
        <taxon>Claviceps</taxon>
    </lineage>
</organism>
<accession>M1W424</accession>
<protein>
    <recommendedName>
        <fullName evidence="4">C6 finger domain transcription factor tcpZ</fullName>
    </recommendedName>
    <alternativeName>
        <fullName evidence="4">Thioclapurine biosynthesis protein Z</fullName>
    </alternativeName>
</protein>
<proteinExistence type="inferred from homology"/>
<keyword id="KW-0238">DNA-binding</keyword>
<keyword id="KW-0479">Metal-binding</keyword>
<keyword id="KW-0539">Nucleus</keyword>
<keyword id="KW-1185">Reference proteome</keyword>
<keyword id="KW-0804">Transcription</keyword>
<keyword id="KW-0805">Transcription regulation</keyword>
<keyword id="KW-0862">Zinc</keyword>